<protein>
    <recommendedName>
        <fullName evidence="1">Inosine/xanthosine triphosphatase</fullName>
        <shortName evidence="1">ITPase/XTPase</shortName>
        <ecNumber evidence="1">3.6.1.73</ecNumber>
    </recommendedName>
    <alternativeName>
        <fullName evidence="1">Non-canonical purine NTP phosphatase</fullName>
    </alternativeName>
    <alternativeName>
        <fullName evidence="1">Non-standard purine NTP phosphatase</fullName>
    </alternativeName>
    <alternativeName>
        <fullName evidence="1">Nucleoside-triphosphate phosphatase</fullName>
        <shortName evidence="1">NTPase</shortName>
    </alternativeName>
</protein>
<reference key="1">
    <citation type="submission" date="2006-08" db="EMBL/GenBank/DDBJ databases">
        <title>Complete sequence of chromosome 1 of Shewanella sp. MR-7.</title>
        <authorList>
            <person name="Copeland A."/>
            <person name="Lucas S."/>
            <person name="Lapidus A."/>
            <person name="Barry K."/>
            <person name="Detter J.C."/>
            <person name="Glavina del Rio T."/>
            <person name="Hammon N."/>
            <person name="Israni S."/>
            <person name="Dalin E."/>
            <person name="Tice H."/>
            <person name="Pitluck S."/>
            <person name="Kiss H."/>
            <person name="Brettin T."/>
            <person name="Bruce D."/>
            <person name="Han C."/>
            <person name="Tapia R."/>
            <person name="Gilna P."/>
            <person name="Schmutz J."/>
            <person name="Larimer F."/>
            <person name="Land M."/>
            <person name="Hauser L."/>
            <person name="Kyrpides N."/>
            <person name="Mikhailova N."/>
            <person name="Nealson K."/>
            <person name="Konstantinidis K."/>
            <person name="Klappenbach J."/>
            <person name="Tiedje J."/>
            <person name="Richardson P."/>
        </authorList>
    </citation>
    <scope>NUCLEOTIDE SEQUENCE [LARGE SCALE GENOMIC DNA]</scope>
    <source>
        <strain>MR-7</strain>
    </source>
</reference>
<dbReference type="EC" id="3.6.1.73" evidence="1"/>
<dbReference type="EMBL" id="CP000444">
    <property type="protein sequence ID" value="ABI44247.1"/>
    <property type="molecule type" value="Genomic_DNA"/>
</dbReference>
<dbReference type="SMR" id="Q0HRK8"/>
<dbReference type="KEGG" id="shm:Shewmr7_3264"/>
<dbReference type="HOGENOM" id="CLU_087417_1_0_6"/>
<dbReference type="GO" id="GO:0103023">
    <property type="term" value="F:ITPase activity"/>
    <property type="evidence" value="ECO:0007669"/>
    <property type="project" value="UniProtKB-EC"/>
</dbReference>
<dbReference type="GO" id="GO:0046872">
    <property type="term" value="F:metal ion binding"/>
    <property type="evidence" value="ECO:0007669"/>
    <property type="project" value="UniProtKB-KW"/>
</dbReference>
<dbReference type="GO" id="GO:0000166">
    <property type="term" value="F:nucleotide binding"/>
    <property type="evidence" value="ECO:0007669"/>
    <property type="project" value="UniProtKB-KW"/>
</dbReference>
<dbReference type="GO" id="GO:0017111">
    <property type="term" value="F:ribonucleoside triphosphate phosphatase activity"/>
    <property type="evidence" value="ECO:0000250"/>
    <property type="project" value="UniProtKB"/>
</dbReference>
<dbReference type="GO" id="GO:0009117">
    <property type="term" value="P:nucleotide metabolic process"/>
    <property type="evidence" value="ECO:0007669"/>
    <property type="project" value="UniProtKB-KW"/>
</dbReference>
<dbReference type="GO" id="GO:0006772">
    <property type="term" value="P:thiamine metabolic process"/>
    <property type="evidence" value="ECO:0007669"/>
    <property type="project" value="TreeGrafter"/>
</dbReference>
<dbReference type="FunFam" id="3.90.950.10:FF:000002">
    <property type="entry name" value="Inosine/xanthosine triphosphatase"/>
    <property type="match status" value="1"/>
</dbReference>
<dbReference type="Gene3D" id="3.90.950.10">
    <property type="match status" value="1"/>
</dbReference>
<dbReference type="HAMAP" id="MF_00648">
    <property type="entry name" value="Non_canon_purine_NTPase_YjjX"/>
    <property type="match status" value="1"/>
</dbReference>
<dbReference type="InterPro" id="IPR029001">
    <property type="entry name" value="ITPase-like_fam"/>
</dbReference>
<dbReference type="InterPro" id="IPR002786">
    <property type="entry name" value="Non_canon_purine_NTPase"/>
</dbReference>
<dbReference type="InterPro" id="IPR026533">
    <property type="entry name" value="NTPase/PRRC1"/>
</dbReference>
<dbReference type="InterPro" id="IPR050299">
    <property type="entry name" value="YjjX_NTPase"/>
</dbReference>
<dbReference type="NCBIfam" id="TIGR00258">
    <property type="entry name" value="inosine/xanthosine triphosphatase"/>
    <property type="match status" value="1"/>
</dbReference>
<dbReference type="NCBIfam" id="NF003459">
    <property type="entry name" value="PRK05074.1"/>
    <property type="match status" value="1"/>
</dbReference>
<dbReference type="PANTHER" id="PTHR34699">
    <property type="match status" value="1"/>
</dbReference>
<dbReference type="PANTHER" id="PTHR34699:SF2">
    <property type="entry name" value="NON-CANONICAL PURINE NTP PHOSPHATASE_PRRC1 DOMAIN-CONTAINING PROTEIN"/>
    <property type="match status" value="1"/>
</dbReference>
<dbReference type="Pfam" id="PF01931">
    <property type="entry name" value="NTPase_I-T"/>
    <property type="match status" value="1"/>
</dbReference>
<dbReference type="SUPFAM" id="SSF52972">
    <property type="entry name" value="ITPase-like"/>
    <property type="match status" value="1"/>
</dbReference>
<accession>Q0HRK8</accession>
<keyword id="KW-0378">Hydrolase</keyword>
<keyword id="KW-0460">Magnesium</keyword>
<keyword id="KW-0464">Manganese</keyword>
<keyword id="KW-0479">Metal-binding</keyword>
<keyword id="KW-0546">Nucleotide metabolism</keyword>
<keyword id="KW-0547">Nucleotide-binding</keyword>
<proteinExistence type="inferred from homology"/>
<feature type="chain" id="PRO_1000056960" description="Inosine/xanthosine triphosphatase">
    <location>
        <begin position="1"/>
        <end position="179"/>
    </location>
</feature>
<feature type="binding site" evidence="1">
    <location>
        <begin position="71"/>
        <end position="72"/>
    </location>
    <ligand>
        <name>substrate</name>
    </ligand>
</feature>
<feature type="binding site" evidence="1">
    <location>
        <position position="71"/>
    </location>
    <ligand>
        <name>Mg(2+)</name>
        <dbReference type="ChEBI" id="CHEBI:18420"/>
    </ligand>
</feature>
<sequence>MQQNIIKVIVGSKNPVKINAAANAMALLFPEYEIQTQGMDAPSGVPAQPMTDSDTRQGAINRVHYCQQQVEADYYFAMEGGVDCFEFGPATFAYIAIAHQARLSIGRGALLPLPMQVYQALEAGEELGHVMDRLFNTVNIKQKGGAIGLLTHGHATRESNYTQAIILAMAPFLNPELYP</sequence>
<organism>
    <name type="scientific">Shewanella sp. (strain MR-7)</name>
    <dbReference type="NCBI Taxonomy" id="60481"/>
    <lineage>
        <taxon>Bacteria</taxon>
        <taxon>Pseudomonadati</taxon>
        <taxon>Pseudomonadota</taxon>
        <taxon>Gammaproteobacteria</taxon>
        <taxon>Alteromonadales</taxon>
        <taxon>Shewanellaceae</taxon>
        <taxon>Shewanella</taxon>
    </lineage>
</organism>
<comment type="function">
    <text evidence="1">Phosphatase that hydrolyzes non-canonical purine nucleotides such as XTP and ITP to their respective diphosphate derivatives. Probably excludes non-canonical purines from DNA/RNA precursor pool, thus preventing their incorporation into DNA/RNA and avoiding chromosomal lesions.</text>
</comment>
<comment type="catalytic activity">
    <reaction evidence="1">
        <text>XTP + H2O = XDP + phosphate + H(+)</text>
        <dbReference type="Rhea" id="RHEA:28406"/>
        <dbReference type="ChEBI" id="CHEBI:15377"/>
        <dbReference type="ChEBI" id="CHEBI:15378"/>
        <dbReference type="ChEBI" id="CHEBI:43474"/>
        <dbReference type="ChEBI" id="CHEBI:59884"/>
        <dbReference type="ChEBI" id="CHEBI:61314"/>
        <dbReference type="EC" id="3.6.1.73"/>
    </reaction>
</comment>
<comment type="catalytic activity">
    <reaction evidence="1">
        <text>ITP + H2O = IDP + phosphate + H(+)</text>
        <dbReference type="Rhea" id="RHEA:28330"/>
        <dbReference type="ChEBI" id="CHEBI:15377"/>
        <dbReference type="ChEBI" id="CHEBI:15378"/>
        <dbReference type="ChEBI" id="CHEBI:43474"/>
        <dbReference type="ChEBI" id="CHEBI:58280"/>
        <dbReference type="ChEBI" id="CHEBI:61402"/>
        <dbReference type="EC" id="3.6.1.73"/>
    </reaction>
</comment>
<comment type="cofactor">
    <cofactor evidence="1">
        <name>Mg(2+)</name>
        <dbReference type="ChEBI" id="CHEBI:18420"/>
    </cofactor>
    <cofactor evidence="1">
        <name>Mn(2+)</name>
        <dbReference type="ChEBI" id="CHEBI:29035"/>
    </cofactor>
    <text evidence="1">Binds 1 divalent metal cation per subunit; can use either Mg(2+) or Mn(2+).</text>
</comment>
<comment type="subunit">
    <text evidence="1">Homodimer.</text>
</comment>
<comment type="similarity">
    <text evidence="1">Belongs to the YjjX NTPase family.</text>
</comment>
<gene>
    <name type="ordered locus">Shewmr7_3264</name>
</gene>
<name>NCPP_SHESR</name>
<evidence type="ECO:0000255" key="1">
    <source>
        <dbReference type="HAMAP-Rule" id="MF_00648"/>
    </source>
</evidence>